<keyword id="KW-0233">DNA recombination</keyword>
<keyword id="KW-0238">DNA-binding</keyword>
<keyword id="KW-1185">Reference proteome</keyword>
<keyword id="KW-0804">Transcription</keyword>
<keyword id="KW-0805">Transcription regulation</keyword>
<keyword id="KW-0810">Translation regulation</keyword>
<gene>
    <name type="primary">ihfA</name>
    <name type="synonym">himA</name>
    <name type="ordered locus">ZMO1122</name>
</gene>
<protein>
    <recommendedName>
        <fullName>Integration host factor subunit alpha</fullName>
        <shortName>IHF-alpha</shortName>
    </recommendedName>
</protein>
<feature type="chain" id="PRO_0000105039" description="Integration host factor subunit alpha">
    <location>
        <begin position="1"/>
        <end position="100"/>
    </location>
</feature>
<dbReference type="EMBL" id="AF176314">
    <property type="protein sequence ID" value="AAD53893.1"/>
    <property type="status" value="ALT_INIT"/>
    <property type="molecule type" value="Genomic_DNA"/>
</dbReference>
<dbReference type="EMBL" id="AE008692">
    <property type="protein sequence ID" value="AAV89746.1"/>
    <property type="status" value="ALT_INIT"/>
    <property type="molecule type" value="Genomic_DNA"/>
</dbReference>
<dbReference type="SMR" id="Q9RNZ5"/>
<dbReference type="STRING" id="264203.ZMO1122"/>
<dbReference type="KEGG" id="zmo:ZMO1122"/>
<dbReference type="eggNOG" id="COG0776">
    <property type="taxonomic scope" value="Bacteria"/>
</dbReference>
<dbReference type="HOGENOM" id="CLU_105066_1_1_5"/>
<dbReference type="Proteomes" id="UP000001173">
    <property type="component" value="Chromosome"/>
</dbReference>
<dbReference type="GO" id="GO:0005829">
    <property type="term" value="C:cytosol"/>
    <property type="evidence" value="ECO:0007669"/>
    <property type="project" value="TreeGrafter"/>
</dbReference>
<dbReference type="GO" id="GO:0003677">
    <property type="term" value="F:DNA binding"/>
    <property type="evidence" value="ECO:0007669"/>
    <property type="project" value="UniProtKB-UniRule"/>
</dbReference>
<dbReference type="GO" id="GO:0030527">
    <property type="term" value="F:structural constituent of chromatin"/>
    <property type="evidence" value="ECO:0007669"/>
    <property type="project" value="InterPro"/>
</dbReference>
<dbReference type="GO" id="GO:0006310">
    <property type="term" value="P:DNA recombination"/>
    <property type="evidence" value="ECO:0007669"/>
    <property type="project" value="UniProtKB-UniRule"/>
</dbReference>
<dbReference type="GO" id="GO:0009893">
    <property type="term" value="P:positive regulation of metabolic process"/>
    <property type="evidence" value="ECO:0007669"/>
    <property type="project" value="UniProtKB-ARBA"/>
</dbReference>
<dbReference type="GO" id="GO:0006355">
    <property type="term" value="P:regulation of DNA-templated transcription"/>
    <property type="evidence" value="ECO:0007669"/>
    <property type="project" value="UniProtKB-UniRule"/>
</dbReference>
<dbReference type="GO" id="GO:0006417">
    <property type="term" value="P:regulation of translation"/>
    <property type="evidence" value="ECO:0007669"/>
    <property type="project" value="UniProtKB-UniRule"/>
</dbReference>
<dbReference type="CDD" id="cd13835">
    <property type="entry name" value="IHF_A"/>
    <property type="match status" value="1"/>
</dbReference>
<dbReference type="Gene3D" id="4.10.520.10">
    <property type="entry name" value="IHF-like DNA-binding proteins"/>
    <property type="match status" value="1"/>
</dbReference>
<dbReference type="HAMAP" id="MF_00380">
    <property type="entry name" value="IHF_alpha"/>
    <property type="match status" value="1"/>
</dbReference>
<dbReference type="InterPro" id="IPR000119">
    <property type="entry name" value="Hist_DNA-bd"/>
</dbReference>
<dbReference type="InterPro" id="IPR020816">
    <property type="entry name" value="Histone-like_DNA-bd_CS"/>
</dbReference>
<dbReference type="InterPro" id="IPR010992">
    <property type="entry name" value="IHF-like_DNA-bd_dom_sf"/>
</dbReference>
<dbReference type="InterPro" id="IPR005684">
    <property type="entry name" value="IHF_alpha"/>
</dbReference>
<dbReference type="NCBIfam" id="TIGR00987">
    <property type="entry name" value="himA"/>
    <property type="match status" value="1"/>
</dbReference>
<dbReference type="NCBIfam" id="NF001401">
    <property type="entry name" value="PRK00285.1"/>
    <property type="match status" value="1"/>
</dbReference>
<dbReference type="PANTHER" id="PTHR33175">
    <property type="entry name" value="DNA-BINDING PROTEIN HU"/>
    <property type="match status" value="1"/>
</dbReference>
<dbReference type="PANTHER" id="PTHR33175:SF2">
    <property type="entry name" value="INTEGRATION HOST FACTOR SUBUNIT ALPHA"/>
    <property type="match status" value="1"/>
</dbReference>
<dbReference type="Pfam" id="PF00216">
    <property type="entry name" value="Bac_DNA_binding"/>
    <property type="match status" value="1"/>
</dbReference>
<dbReference type="PRINTS" id="PR01727">
    <property type="entry name" value="DNABINDINGHU"/>
</dbReference>
<dbReference type="SMART" id="SM00411">
    <property type="entry name" value="BHL"/>
    <property type="match status" value="1"/>
</dbReference>
<dbReference type="SUPFAM" id="SSF47729">
    <property type="entry name" value="IHF-like DNA-binding proteins"/>
    <property type="match status" value="1"/>
</dbReference>
<dbReference type="PROSITE" id="PS00045">
    <property type="entry name" value="HISTONE_LIKE"/>
    <property type="match status" value="1"/>
</dbReference>
<name>IHFA_ZYMMO</name>
<evidence type="ECO:0000250" key="1"/>
<evidence type="ECO:0000305" key="2"/>
<reference key="1">
    <citation type="submission" date="1999-08" db="EMBL/GenBank/DDBJ databases">
        <title>Sequence analysis of 42B11 fosmid clone of Zymomonas mobilis ZM4.</title>
        <authorList>
            <person name="Lee H.J."/>
            <person name="Kang H.S."/>
        </authorList>
    </citation>
    <scope>NUCLEOTIDE SEQUENCE [GENOMIC DNA]</scope>
    <source>
        <strain>ATCC 31821 / ZM4 / CP4</strain>
    </source>
</reference>
<reference key="2">
    <citation type="journal article" date="2005" name="Nat. Biotechnol.">
        <title>The genome sequence of the ethanologenic bacterium Zymomonas mobilis ZM4.</title>
        <authorList>
            <person name="Seo J.-S."/>
            <person name="Chong H."/>
            <person name="Park H.S."/>
            <person name="Yoon K.-O."/>
            <person name="Jung C."/>
            <person name="Kim J.J."/>
            <person name="Hong J.H."/>
            <person name="Kim H."/>
            <person name="Kim J.-H."/>
            <person name="Kil J.-I."/>
            <person name="Park C.J."/>
            <person name="Oh H.-M."/>
            <person name="Lee J.-S."/>
            <person name="Jin S.-J."/>
            <person name="Um H.-W."/>
            <person name="Lee H.-J."/>
            <person name="Oh S.-J."/>
            <person name="Kim J.Y."/>
            <person name="Kang H.L."/>
            <person name="Lee S.Y."/>
            <person name="Lee K.J."/>
            <person name="Kang H.S."/>
        </authorList>
    </citation>
    <scope>NUCLEOTIDE SEQUENCE [LARGE SCALE GENOMIC DNA]</scope>
    <source>
        <strain>ATCC 31821 / ZM4 / CP4</strain>
    </source>
</reference>
<sequence length="100" mass="11191">MQADIPTLTRADITDMLYHEVGLSRADSAKMIEQMLGHITDALKKGENVKISGFGSFILRDKNERVGRNPKTGIEVPIAPRRVLTFRASQLMRQRIIKGA</sequence>
<comment type="function">
    <text evidence="1">This protein is one of the two subunits of integration host factor, a specific DNA-binding protein that functions in genetic recombination as well as in transcriptional and translational control.</text>
</comment>
<comment type="subunit">
    <text evidence="1">Heterodimer of an alpha and a beta chain.</text>
</comment>
<comment type="similarity">
    <text evidence="2">Belongs to the bacterial histone-like protein family.</text>
</comment>
<comment type="sequence caution" evidence="2">
    <conflict type="erroneous initiation">
        <sequence resource="EMBL-CDS" id="AAD53893"/>
    </conflict>
</comment>
<comment type="sequence caution" evidence="2">
    <conflict type="erroneous initiation">
        <sequence resource="EMBL-CDS" id="AAV89746"/>
    </conflict>
</comment>
<accession>Q9RNZ5</accession>
<accession>Q5NNG4</accession>
<organism>
    <name type="scientific">Zymomonas mobilis subsp. mobilis (strain ATCC 31821 / ZM4 / CP4)</name>
    <dbReference type="NCBI Taxonomy" id="264203"/>
    <lineage>
        <taxon>Bacteria</taxon>
        <taxon>Pseudomonadati</taxon>
        <taxon>Pseudomonadota</taxon>
        <taxon>Alphaproteobacteria</taxon>
        <taxon>Sphingomonadales</taxon>
        <taxon>Zymomonadaceae</taxon>
        <taxon>Zymomonas</taxon>
    </lineage>
</organism>
<proteinExistence type="inferred from homology"/>